<protein>
    <recommendedName>
        <fullName evidence="1">Large ribosomal subunit protein bL32</fullName>
    </recommendedName>
    <alternativeName>
        <fullName evidence="2">50S ribosomal protein L32</fullName>
    </alternativeName>
</protein>
<name>RL32_BACC2</name>
<dbReference type="EMBL" id="CP001186">
    <property type="protein sequence ID" value="ACK95374.1"/>
    <property type="molecule type" value="Genomic_DNA"/>
</dbReference>
<dbReference type="RefSeq" id="WP_001984764.1">
    <property type="nucleotide sequence ID" value="NC_011772.1"/>
</dbReference>
<dbReference type="SMR" id="B7IVF8"/>
<dbReference type="GeneID" id="93007188"/>
<dbReference type="KEGG" id="bcg:BCG9842_B1217"/>
<dbReference type="HOGENOM" id="CLU_129084_1_3_9"/>
<dbReference type="Proteomes" id="UP000006744">
    <property type="component" value="Chromosome"/>
</dbReference>
<dbReference type="GO" id="GO:0015934">
    <property type="term" value="C:large ribosomal subunit"/>
    <property type="evidence" value="ECO:0007669"/>
    <property type="project" value="InterPro"/>
</dbReference>
<dbReference type="GO" id="GO:0003735">
    <property type="term" value="F:structural constituent of ribosome"/>
    <property type="evidence" value="ECO:0007669"/>
    <property type="project" value="InterPro"/>
</dbReference>
<dbReference type="GO" id="GO:0006412">
    <property type="term" value="P:translation"/>
    <property type="evidence" value="ECO:0007669"/>
    <property type="project" value="UniProtKB-UniRule"/>
</dbReference>
<dbReference type="HAMAP" id="MF_00340">
    <property type="entry name" value="Ribosomal_bL32"/>
    <property type="match status" value="1"/>
</dbReference>
<dbReference type="InterPro" id="IPR002677">
    <property type="entry name" value="Ribosomal_bL32"/>
</dbReference>
<dbReference type="InterPro" id="IPR044957">
    <property type="entry name" value="Ribosomal_bL32_bact"/>
</dbReference>
<dbReference type="InterPro" id="IPR011332">
    <property type="entry name" value="Ribosomal_zn-bd"/>
</dbReference>
<dbReference type="NCBIfam" id="TIGR01031">
    <property type="entry name" value="rpmF_bact"/>
    <property type="match status" value="1"/>
</dbReference>
<dbReference type="PANTHER" id="PTHR35534">
    <property type="entry name" value="50S RIBOSOMAL PROTEIN L32"/>
    <property type="match status" value="1"/>
</dbReference>
<dbReference type="PANTHER" id="PTHR35534:SF2">
    <property type="entry name" value="LARGE RIBOSOMAL SUBUNIT PROTEIN BL32"/>
    <property type="match status" value="1"/>
</dbReference>
<dbReference type="Pfam" id="PF01783">
    <property type="entry name" value="Ribosomal_L32p"/>
    <property type="match status" value="1"/>
</dbReference>
<dbReference type="SUPFAM" id="SSF57829">
    <property type="entry name" value="Zn-binding ribosomal proteins"/>
    <property type="match status" value="1"/>
</dbReference>
<organism>
    <name type="scientific">Bacillus cereus (strain G9842)</name>
    <dbReference type="NCBI Taxonomy" id="405531"/>
    <lineage>
        <taxon>Bacteria</taxon>
        <taxon>Bacillati</taxon>
        <taxon>Bacillota</taxon>
        <taxon>Bacilli</taxon>
        <taxon>Bacillales</taxon>
        <taxon>Bacillaceae</taxon>
        <taxon>Bacillus</taxon>
        <taxon>Bacillus cereus group</taxon>
    </lineage>
</organism>
<proteinExistence type="inferred from homology"/>
<evidence type="ECO:0000255" key="1">
    <source>
        <dbReference type="HAMAP-Rule" id="MF_00340"/>
    </source>
</evidence>
<evidence type="ECO:0000305" key="2"/>
<gene>
    <name evidence="1" type="primary">rpmF</name>
    <name type="ordered locus">BCG9842_B1217</name>
</gene>
<feature type="chain" id="PRO_1000120085" description="Large ribosomal subunit protein bL32">
    <location>
        <begin position="1"/>
        <end position="57"/>
    </location>
</feature>
<accession>B7IVF8</accession>
<sequence length="57" mass="6394">MAVPFRRTSKTVKRKRRTHFKLSVPGMVECPSCGEAKLAHRVCKACGTYKGKEVISK</sequence>
<keyword id="KW-0687">Ribonucleoprotein</keyword>
<keyword id="KW-0689">Ribosomal protein</keyword>
<reference key="1">
    <citation type="submission" date="2008-10" db="EMBL/GenBank/DDBJ databases">
        <title>Genome sequence of Bacillus cereus G9842.</title>
        <authorList>
            <person name="Dodson R.J."/>
            <person name="Durkin A.S."/>
            <person name="Rosovitz M.J."/>
            <person name="Rasko D.A."/>
            <person name="Hoffmaster A."/>
            <person name="Ravel J."/>
            <person name="Sutton G."/>
        </authorList>
    </citation>
    <scope>NUCLEOTIDE SEQUENCE [LARGE SCALE GENOMIC DNA]</scope>
    <source>
        <strain>G9842</strain>
    </source>
</reference>
<comment type="similarity">
    <text evidence="1">Belongs to the bacterial ribosomal protein bL32 family.</text>
</comment>